<dbReference type="EMBL" id="CP000153">
    <property type="protein sequence ID" value="ABB43957.1"/>
    <property type="molecule type" value="Genomic_DNA"/>
</dbReference>
<dbReference type="RefSeq" id="WP_011372311.1">
    <property type="nucleotide sequence ID" value="NC_007575.1"/>
</dbReference>
<dbReference type="SMR" id="Q30SS4"/>
<dbReference type="STRING" id="326298.Suden_0678"/>
<dbReference type="KEGG" id="tdn:Suden_0678"/>
<dbReference type="eggNOG" id="COG0779">
    <property type="taxonomic scope" value="Bacteria"/>
</dbReference>
<dbReference type="HOGENOM" id="CLU_070525_2_2_7"/>
<dbReference type="OrthoDB" id="9805006at2"/>
<dbReference type="Proteomes" id="UP000002714">
    <property type="component" value="Chromosome"/>
</dbReference>
<dbReference type="GO" id="GO:0005829">
    <property type="term" value="C:cytosol"/>
    <property type="evidence" value="ECO:0007669"/>
    <property type="project" value="TreeGrafter"/>
</dbReference>
<dbReference type="GO" id="GO:0000028">
    <property type="term" value="P:ribosomal small subunit assembly"/>
    <property type="evidence" value="ECO:0007669"/>
    <property type="project" value="TreeGrafter"/>
</dbReference>
<dbReference type="GO" id="GO:0006412">
    <property type="term" value="P:translation"/>
    <property type="evidence" value="ECO:0007669"/>
    <property type="project" value="TreeGrafter"/>
</dbReference>
<dbReference type="CDD" id="cd01734">
    <property type="entry name" value="YlxS_C"/>
    <property type="match status" value="1"/>
</dbReference>
<dbReference type="Gene3D" id="3.30.300.70">
    <property type="entry name" value="RimP-like superfamily, N-terminal"/>
    <property type="match status" value="1"/>
</dbReference>
<dbReference type="HAMAP" id="MF_01077">
    <property type="entry name" value="RimP"/>
    <property type="match status" value="1"/>
</dbReference>
<dbReference type="InterPro" id="IPR003728">
    <property type="entry name" value="Ribosome_maturation_RimP"/>
</dbReference>
<dbReference type="InterPro" id="IPR028998">
    <property type="entry name" value="RimP_C"/>
</dbReference>
<dbReference type="InterPro" id="IPR036847">
    <property type="entry name" value="RimP_C_sf"/>
</dbReference>
<dbReference type="InterPro" id="IPR028989">
    <property type="entry name" value="RimP_N"/>
</dbReference>
<dbReference type="InterPro" id="IPR035956">
    <property type="entry name" value="RimP_N_sf"/>
</dbReference>
<dbReference type="PANTHER" id="PTHR33867">
    <property type="entry name" value="RIBOSOME MATURATION FACTOR RIMP"/>
    <property type="match status" value="1"/>
</dbReference>
<dbReference type="PANTHER" id="PTHR33867:SF1">
    <property type="entry name" value="RIBOSOME MATURATION FACTOR RIMP"/>
    <property type="match status" value="1"/>
</dbReference>
<dbReference type="Pfam" id="PF17384">
    <property type="entry name" value="DUF150_C"/>
    <property type="match status" value="1"/>
</dbReference>
<dbReference type="Pfam" id="PF02576">
    <property type="entry name" value="RimP_N"/>
    <property type="match status" value="1"/>
</dbReference>
<dbReference type="SUPFAM" id="SSF74942">
    <property type="entry name" value="YhbC-like, C-terminal domain"/>
    <property type="match status" value="1"/>
</dbReference>
<dbReference type="SUPFAM" id="SSF75420">
    <property type="entry name" value="YhbC-like, N-terminal domain"/>
    <property type="match status" value="1"/>
</dbReference>
<name>RIMP_SULDN</name>
<feature type="chain" id="PRO_0000229290" description="Ribosome maturation factor RimP">
    <location>
        <begin position="1"/>
        <end position="149"/>
    </location>
</feature>
<comment type="function">
    <text evidence="1">Required for maturation of 30S ribosomal subunits.</text>
</comment>
<comment type="subcellular location">
    <subcellularLocation>
        <location evidence="1">Cytoplasm</location>
    </subcellularLocation>
</comment>
<comment type="similarity">
    <text evidence="1">Belongs to the RimP family.</text>
</comment>
<organism>
    <name type="scientific">Sulfurimonas denitrificans (strain ATCC 33889 / DSM 1251)</name>
    <name type="common">Thiomicrospira denitrificans (strain ATCC 33889 / DSM 1251)</name>
    <dbReference type="NCBI Taxonomy" id="326298"/>
    <lineage>
        <taxon>Bacteria</taxon>
        <taxon>Pseudomonadati</taxon>
        <taxon>Campylobacterota</taxon>
        <taxon>Epsilonproteobacteria</taxon>
        <taxon>Campylobacterales</taxon>
        <taxon>Sulfurimonadaceae</taxon>
        <taxon>Sulfurimonas</taxon>
    </lineage>
</organism>
<sequence>MSLEKDIESFVKSLDLELYEISVARDGDDSIYRVNVLSTQIEDGKKKGVSLDECVHLSRLISPLLDVTPPMSGEYRLEVGTPGIERKVSTLKQFVLSIGERVALTLKSKEKLKGLLLRVEESNIYLDVDAEEVCVEFAQISKAKTYFEW</sequence>
<protein>
    <recommendedName>
        <fullName evidence="1">Ribosome maturation factor RimP</fullName>
    </recommendedName>
</protein>
<evidence type="ECO:0000255" key="1">
    <source>
        <dbReference type="HAMAP-Rule" id="MF_01077"/>
    </source>
</evidence>
<accession>Q30SS4</accession>
<keyword id="KW-0963">Cytoplasm</keyword>
<keyword id="KW-1185">Reference proteome</keyword>
<keyword id="KW-0690">Ribosome biogenesis</keyword>
<proteinExistence type="inferred from homology"/>
<gene>
    <name evidence="1" type="primary">rimP</name>
    <name type="ordered locus">Suden_0678</name>
</gene>
<reference key="1">
    <citation type="journal article" date="2008" name="Appl. Environ. Microbiol.">
        <title>Genome of the epsilonproteobacterial chemolithoautotroph Sulfurimonas denitrificans.</title>
        <authorList>
            <person name="Sievert S.M."/>
            <person name="Scott K.M."/>
            <person name="Klotz M.G."/>
            <person name="Chain P.S.G."/>
            <person name="Hauser L.J."/>
            <person name="Hemp J."/>
            <person name="Huegler M."/>
            <person name="Land M."/>
            <person name="Lapidus A."/>
            <person name="Larimer F.W."/>
            <person name="Lucas S."/>
            <person name="Malfatti S.A."/>
            <person name="Meyer F."/>
            <person name="Paulsen I.T."/>
            <person name="Ren Q."/>
            <person name="Simon J."/>
            <person name="Bailey K."/>
            <person name="Diaz E."/>
            <person name="Fitzpatrick K.A."/>
            <person name="Glover B."/>
            <person name="Gwatney N."/>
            <person name="Korajkic A."/>
            <person name="Long A."/>
            <person name="Mobberley J.M."/>
            <person name="Pantry S.N."/>
            <person name="Pazder G."/>
            <person name="Peterson S."/>
            <person name="Quintanilla J.D."/>
            <person name="Sprinkle R."/>
            <person name="Stephens J."/>
            <person name="Thomas P."/>
            <person name="Vaughn R."/>
            <person name="Weber M.J."/>
            <person name="Wooten L.L."/>
        </authorList>
    </citation>
    <scope>NUCLEOTIDE SEQUENCE [LARGE SCALE GENOMIC DNA]</scope>
    <source>
        <strain>ATCC 33889 / DSM 1251</strain>
    </source>
</reference>